<proteinExistence type="inferred from homology"/>
<organism>
    <name type="scientific">Salmonella enteritidis PT4 (strain P125109)</name>
    <dbReference type="NCBI Taxonomy" id="550537"/>
    <lineage>
        <taxon>Bacteria</taxon>
        <taxon>Pseudomonadati</taxon>
        <taxon>Pseudomonadota</taxon>
        <taxon>Gammaproteobacteria</taxon>
        <taxon>Enterobacterales</taxon>
        <taxon>Enterobacteriaceae</taxon>
        <taxon>Salmonella</taxon>
    </lineage>
</organism>
<reference key="1">
    <citation type="journal article" date="2008" name="Genome Res.">
        <title>Comparative genome analysis of Salmonella enteritidis PT4 and Salmonella gallinarum 287/91 provides insights into evolutionary and host adaptation pathways.</title>
        <authorList>
            <person name="Thomson N.R."/>
            <person name="Clayton D.J."/>
            <person name="Windhorst D."/>
            <person name="Vernikos G."/>
            <person name="Davidson S."/>
            <person name="Churcher C."/>
            <person name="Quail M.A."/>
            <person name="Stevens M."/>
            <person name="Jones M.A."/>
            <person name="Watson M."/>
            <person name="Barron A."/>
            <person name="Layton A."/>
            <person name="Pickard D."/>
            <person name="Kingsley R.A."/>
            <person name="Bignell A."/>
            <person name="Clark L."/>
            <person name="Harris B."/>
            <person name="Ormond D."/>
            <person name="Abdellah Z."/>
            <person name="Brooks K."/>
            <person name="Cherevach I."/>
            <person name="Chillingworth T."/>
            <person name="Woodward J."/>
            <person name="Norberczak H."/>
            <person name="Lord A."/>
            <person name="Arrowsmith C."/>
            <person name="Jagels K."/>
            <person name="Moule S."/>
            <person name="Mungall K."/>
            <person name="Saunders M."/>
            <person name="Whitehead S."/>
            <person name="Chabalgoity J.A."/>
            <person name="Maskell D."/>
            <person name="Humphreys T."/>
            <person name="Roberts M."/>
            <person name="Barrow P.A."/>
            <person name="Dougan G."/>
            <person name="Parkhill J."/>
        </authorList>
    </citation>
    <scope>NUCLEOTIDE SEQUENCE [LARGE SCALE GENOMIC DNA]</scope>
    <source>
        <strain>P125109</strain>
    </source>
</reference>
<accession>B5QTD7</accession>
<name>AROL_SALEP</name>
<gene>
    <name evidence="1" type="primary">aroL</name>
    <name type="ordered locus">SEN0371</name>
</gene>
<dbReference type="EC" id="2.7.1.71" evidence="1"/>
<dbReference type="EMBL" id="AM933172">
    <property type="protein sequence ID" value="CAR31957.1"/>
    <property type="molecule type" value="Genomic_DNA"/>
</dbReference>
<dbReference type="RefSeq" id="WP_000983569.1">
    <property type="nucleotide sequence ID" value="NC_011294.1"/>
</dbReference>
<dbReference type="SMR" id="B5QTD7"/>
<dbReference type="KEGG" id="set:SEN0371"/>
<dbReference type="HOGENOM" id="CLU_057607_4_3_6"/>
<dbReference type="UniPathway" id="UPA00053">
    <property type="reaction ID" value="UER00088"/>
</dbReference>
<dbReference type="Proteomes" id="UP000000613">
    <property type="component" value="Chromosome"/>
</dbReference>
<dbReference type="GO" id="GO:0005829">
    <property type="term" value="C:cytosol"/>
    <property type="evidence" value="ECO:0007669"/>
    <property type="project" value="TreeGrafter"/>
</dbReference>
<dbReference type="GO" id="GO:0005524">
    <property type="term" value="F:ATP binding"/>
    <property type="evidence" value="ECO:0007669"/>
    <property type="project" value="UniProtKB-UniRule"/>
</dbReference>
<dbReference type="GO" id="GO:0000287">
    <property type="term" value="F:magnesium ion binding"/>
    <property type="evidence" value="ECO:0007669"/>
    <property type="project" value="UniProtKB-UniRule"/>
</dbReference>
<dbReference type="GO" id="GO:0004765">
    <property type="term" value="F:shikimate kinase activity"/>
    <property type="evidence" value="ECO:0007669"/>
    <property type="project" value="UniProtKB-UniRule"/>
</dbReference>
<dbReference type="GO" id="GO:0008652">
    <property type="term" value="P:amino acid biosynthetic process"/>
    <property type="evidence" value="ECO:0007669"/>
    <property type="project" value="UniProtKB-KW"/>
</dbReference>
<dbReference type="GO" id="GO:0009073">
    <property type="term" value="P:aromatic amino acid family biosynthetic process"/>
    <property type="evidence" value="ECO:0007669"/>
    <property type="project" value="UniProtKB-KW"/>
</dbReference>
<dbReference type="GO" id="GO:0009423">
    <property type="term" value="P:chorismate biosynthetic process"/>
    <property type="evidence" value="ECO:0007669"/>
    <property type="project" value="UniProtKB-UniRule"/>
</dbReference>
<dbReference type="CDD" id="cd00464">
    <property type="entry name" value="SK"/>
    <property type="match status" value="1"/>
</dbReference>
<dbReference type="FunFam" id="3.40.50.300:FF:000408">
    <property type="entry name" value="Shikimate kinase 2"/>
    <property type="match status" value="1"/>
</dbReference>
<dbReference type="Gene3D" id="3.40.50.300">
    <property type="entry name" value="P-loop containing nucleotide triphosphate hydrolases"/>
    <property type="match status" value="1"/>
</dbReference>
<dbReference type="HAMAP" id="MF_00109">
    <property type="entry name" value="Shikimate_kinase"/>
    <property type="match status" value="1"/>
</dbReference>
<dbReference type="HAMAP" id="MF_01269">
    <property type="entry name" value="Shikimate_kinase_2"/>
    <property type="match status" value="1"/>
</dbReference>
<dbReference type="InterPro" id="IPR027417">
    <property type="entry name" value="P-loop_NTPase"/>
</dbReference>
<dbReference type="InterPro" id="IPR031322">
    <property type="entry name" value="Shikimate/glucono_kinase"/>
</dbReference>
<dbReference type="InterPro" id="IPR000623">
    <property type="entry name" value="Shikimate_kinase/TSH1"/>
</dbReference>
<dbReference type="InterPro" id="IPR027544">
    <property type="entry name" value="Shikimate_kinase_2"/>
</dbReference>
<dbReference type="InterPro" id="IPR023000">
    <property type="entry name" value="Shikimate_kinase_CS"/>
</dbReference>
<dbReference type="NCBIfam" id="NF002988">
    <property type="entry name" value="PRK03731.1"/>
    <property type="match status" value="1"/>
</dbReference>
<dbReference type="PANTHER" id="PTHR21087">
    <property type="entry name" value="SHIKIMATE KINASE"/>
    <property type="match status" value="1"/>
</dbReference>
<dbReference type="PANTHER" id="PTHR21087:SF21">
    <property type="entry name" value="SHIKIMATE KINASE 2"/>
    <property type="match status" value="1"/>
</dbReference>
<dbReference type="Pfam" id="PF01202">
    <property type="entry name" value="SKI"/>
    <property type="match status" value="1"/>
</dbReference>
<dbReference type="PRINTS" id="PR01100">
    <property type="entry name" value="SHIKIMTKNASE"/>
</dbReference>
<dbReference type="SUPFAM" id="SSF52540">
    <property type="entry name" value="P-loop containing nucleoside triphosphate hydrolases"/>
    <property type="match status" value="1"/>
</dbReference>
<dbReference type="PROSITE" id="PS01128">
    <property type="entry name" value="SHIKIMATE_KINASE"/>
    <property type="match status" value="1"/>
</dbReference>
<evidence type="ECO:0000255" key="1">
    <source>
        <dbReference type="HAMAP-Rule" id="MF_01269"/>
    </source>
</evidence>
<feature type="chain" id="PRO_1000140139" description="Shikimate kinase 2">
    <location>
        <begin position="1"/>
        <end position="181"/>
    </location>
</feature>
<feature type="region of interest" description="LID domain">
    <location>
        <begin position="112"/>
        <end position="126"/>
    </location>
</feature>
<feature type="binding site" evidence="1">
    <location>
        <begin position="12"/>
        <end position="17"/>
    </location>
    <ligand>
        <name>ATP</name>
        <dbReference type="ChEBI" id="CHEBI:30616"/>
    </ligand>
</feature>
<feature type="binding site" evidence="1">
    <location>
        <position position="16"/>
    </location>
    <ligand>
        <name>Mg(2+)</name>
        <dbReference type="ChEBI" id="CHEBI:18420"/>
    </ligand>
</feature>
<feature type="binding site" evidence="1">
    <location>
        <position position="32"/>
    </location>
    <ligand>
        <name>Mg(2+)</name>
        <dbReference type="ChEBI" id="CHEBI:18420"/>
    </ligand>
</feature>
<feature type="binding site" evidence="1">
    <location>
        <position position="34"/>
    </location>
    <ligand>
        <name>substrate</name>
    </ligand>
</feature>
<feature type="binding site" evidence="1">
    <location>
        <position position="58"/>
    </location>
    <ligand>
        <name>substrate</name>
    </ligand>
</feature>
<feature type="binding site" evidence="1">
    <location>
        <position position="79"/>
    </location>
    <ligand>
        <name>substrate</name>
    </ligand>
</feature>
<feature type="binding site" evidence="1">
    <location>
        <position position="120"/>
    </location>
    <ligand>
        <name>ATP</name>
        <dbReference type="ChEBI" id="CHEBI:30616"/>
    </ligand>
</feature>
<feature type="binding site" evidence="1">
    <location>
        <position position="139"/>
    </location>
    <ligand>
        <name>substrate</name>
    </ligand>
</feature>
<comment type="function">
    <text evidence="1">Catalyzes the specific phosphorylation of the 3-hydroxyl group of shikimic acid using ATP as a cosubstrate.</text>
</comment>
<comment type="catalytic activity">
    <reaction evidence="1">
        <text>shikimate + ATP = 3-phosphoshikimate + ADP + H(+)</text>
        <dbReference type="Rhea" id="RHEA:13121"/>
        <dbReference type="ChEBI" id="CHEBI:15378"/>
        <dbReference type="ChEBI" id="CHEBI:30616"/>
        <dbReference type="ChEBI" id="CHEBI:36208"/>
        <dbReference type="ChEBI" id="CHEBI:145989"/>
        <dbReference type="ChEBI" id="CHEBI:456216"/>
        <dbReference type="EC" id="2.7.1.71"/>
    </reaction>
</comment>
<comment type="cofactor">
    <cofactor evidence="1">
        <name>Mg(2+)</name>
        <dbReference type="ChEBI" id="CHEBI:18420"/>
    </cofactor>
    <text evidence="1">Binds 1 Mg(2+) ion per subunit.</text>
</comment>
<comment type="pathway">
    <text evidence="1">Metabolic intermediate biosynthesis; chorismate biosynthesis; chorismate from D-erythrose 4-phosphate and phosphoenolpyruvate: step 5/7.</text>
</comment>
<comment type="subunit">
    <text evidence="1">Monomer.</text>
</comment>
<comment type="subcellular location">
    <subcellularLocation>
        <location evidence="1">Cytoplasm</location>
    </subcellularLocation>
</comment>
<comment type="domain">
    <text evidence="1">The LID domain closes over the active site upon ATP binding.</text>
</comment>
<comment type="similarity">
    <text evidence="1">Belongs to the shikimate kinase family. AroL subfamily.</text>
</comment>
<sequence>MMQPLYLVGPRGCGKTTIGMALAQATGFRFADTDRWLQSHVQMSVADIVEKEGWGGFRARETAALEAVSAPSTVVATGGGIILTEYNRRYMHRVGVVIYLCAPVSTLVNRLEAEPEADLRPTLTGKPLSEEVREVLEQRDALYRETAHYIIDATKAPAQVVSEIIAALPPSTQRLQGDVYT</sequence>
<protein>
    <recommendedName>
        <fullName evidence="1">Shikimate kinase 2</fullName>
        <shortName evidence="1">SK 2</shortName>
        <ecNumber evidence="1">2.7.1.71</ecNumber>
    </recommendedName>
</protein>
<keyword id="KW-0028">Amino-acid biosynthesis</keyword>
<keyword id="KW-0057">Aromatic amino acid biosynthesis</keyword>
<keyword id="KW-0067">ATP-binding</keyword>
<keyword id="KW-0963">Cytoplasm</keyword>
<keyword id="KW-0418">Kinase</keyword>
<keyword id="KW-0460">Magnesium</keyword>
<keyword id="KW-0479">Metal-binding</keyword>
<keyword id="KW-0547">Nucleotide-binding</keyword>
<keyword id="KW-0808">Transferase</keyword>